<sequence length="140" mass="15160">MAIERTFSIIKPDATERNLTGAINALIEKAGLRIVAQKRIRMTREQAETFYAVHKARPFFGELVDFMISGPVVVQVLEGEGAILKYRDVMGATDPSKAADGTIRKLHAKSIGENSVHGSDAAETAAIEIAQFFSGNEIVG</sequence>
<protein>
    <recommendedName>
        <fullName evidence="1">Nucleoside diphosphate kinase</fullName>
        <shortName evidence="1">NDK</shortName>
        <shortName evidence="1">NDP kinase</shortName>
        <ecNumber evidence="1">2.7.4.6</ecNumber>
    </recommendedName>
    <alternativeName>
        <fullName evidence="1">Nucleoside-2-P kinase</fullName>
    </alternativeName>
</protein>
<feature type="chain" id="PRO_1000026209" description="Nucleoside diphosphate kinase">
    <location>
        <begin position="1"/>
        <end position="140"/>
    </location>
</feature>
<feature type="active site" description="Pros-phosphohistidine intermediate" evidence="1">
    <location>
        <position position="117"/>
    </location>
</feature>
<feature type="binding site" evidence="1">
    <location>
        <position position="11"/>
    </location>
    <ligand>
        <name>ATP</name>
        <dbReference type="ChEBI" id="CHEBI:30616"/>
    </ligand>
</feature>
<feature type="binding site" evidence="1">
    <location>
        <position position="59"/>
    </location>
    <ligand>
        <name>ATP</name>
        <dbReference type="ChEBI" id="CHEBI:30616"/>
    </ligand>
</feature>
<feature type="binding site" evidence="1">
    <location>
        <position position="87"/>
    </location>
    <ligand>
        <name>ATP</name>
        <dbReference type="ChEBI" id="CHEBI:30616"/>
    </ligand>
</feature>
<feature type="binding site" evidence="1">
    <location>
        <position position="93"/>
    </location>
    <ligand>
        <name>ATP</name>
        <dbReference type="ChEBI" id="CHEBI:30616"/>
    </ligand>
</feature>
<feature type="binding site" evidence="1">
    <location>
        <position position="104"/>
    </location>
    <ligand>
        <name>ATP</name>
        <dbReference type="ChEBI" id="CHEBI:30616"/>
    </ligand>
</feature>
<feature type="binding site" evidence="1">
    <location>
        <position position="114"/>
    </location>
    <ligand>
        <name>ATP</name>
        <dbReference type="ChEBI" id="CHEBI:30616"/>
    </ligand>
</feature>
<accession>A5EIC0</accession>
<name>NDK_BRASB</name>
<comment type="function">
    <text evidence="1">Major role in the synthesis of nucleoside triphosphates other than ATP. The ATP gamma phosphate is transferred to the NDP beta phosphate via a ping-pong mechanism, using a phosphorylated active-site intermediate.</text>
</comment>
<comment type="catalytic activity">
    <reaction evidence="1">
        <text>a 2'-deoxyribonucleoside 5'-diphosphate + ATP = a 2'-deoxyribonucleoside 5'-triphosphate + ADP</text>
        <dbReference type="Rhea" id="RHEA:44640"/>
        <dbReference type="ChEBI" id="CHEBI:30616"/>
        <dbReference type="ChEBI" id="CHEBI:61560"/>
        <dbReference type="ChEBI" id="CHEBI:73316"/>
        <dbReference type="ChEBI" id="CHEBI:456216"/>
        <dbReference type="EC" id="2.7.4.6"/>
    </reaction>
</comment>
<comment type="catalytic activity">
    <reaction evidence="1">
        <text>a ribonucleoside 5'-diphosphate + ATP = a ribonucleoside 5'-triphosphate + ADP</text>
        <dbReference type="Rhea" id="RHEA:18113"/>
        <dbReference type="ChEBI" id="CHEBI:30616"/>
        <dbReference type="ChEBI" id="CHEBI:57930"/>
        <dbReference type="ChEBI" id="CHEBI:61557"/>
        <dbReference type="ChEBI" id="CHEBI:456216"/>
        <dbReference type="EC" id="2.7.4.6"/>
    </reaction>
</comment>
<comment type="cofactor">
    <cofactor evidence="1">
        <name>Mg(2+)</name>
        <dbReference type="ChEBI" id="CHEBI:18420"/>
    </cofactor>
</comment>
<comment type="subunit">
    <text evidence="1">Homotetramer.</text>
</comment>
<comment type="subcellular location">
    <subcellularLocation>
        <location evidence="1">Cytoplasm</location>
    </subcellularLocation>
</comment>
<comment type="similarity">
    <text evidence="1">Belongs to the NDK family.</text>
</comment>
<evidence type="ECO:0000255" key="1">
    <source>
        <dbReference type="HAMAP-Rule" id="MF_00451"/>
    </source>
</evidence>
<gene>
    <name evidence="1" type="primary">ndk</name>
    <name type="ordered locus">BBta_3838</name>
</gene>
<keyword id="KW-0067">ATP-binding</keyword>
<keyword id="KW-0963">Cytoplasm</keyword>
<keyword id="KW-0418">Kinase</keyword>
<keyword id="KW-0460">Magnesium</keyword>
<keyword id="KW-0479">Metal-binding</keyword>
<keyword id="KW-0546">Nucleotide metabolism</keyword>
<keyword id="KW-0547">Nucleotide-binding</keyword>
<keyword id="KW-0597">Phosphoprotein</keyword>
<keyword id="KW-1185">Reference proteome</keyword>
<keyword id="KW-0808">Transferase</keyword>
<proteinExistence type="inferred from homology"/>
<organism>
    <name type="scientific">Bradyrhizobium sp. (strain BTAi1 / ATCC BAA-1182)</name>
    <dbReference type="NCBI Taxonomy" id="288000"/>
    <lineage>
        <taxon>Bacteria</taxon>
        <taxon>Pseudomonadati</taxon>
        <taxon>Pseudomonadota</taxon>
        <taxon>Alphaproteobacteria</taxon>
        <taxon>Hyphomicrobiales</taxon>
        <taxon>Nitrobacteraceae</taxon>
        <taxon>Bradyrhizobium</taxon>
    </lineage>
</organism>
<reference key="1">
    <citation type="journal article" date="2007" name="Science">
        <title>Legumes symbioses: absence of nod genes in photosynthetic bradyrhizobia.</title>
        <authorList>
            <person name="Giraud E."/>
            <person name="Moulin L."/>
            <person name="Vallenet D."/>
            <person name="Barbe V."/>
            <person name="Cytryn E."/>
            <person name="Avarre J.-C."/>
            <person name="Jaubert M."/>
            <person name="Simon D."/>
            <person name="Cartieaux F."/>
            <person name="Prin Y."/>
            <person name="Bena G."/>
            <person name="Hannibal L."/>
            <person name="Fardoux J."/>
            <person name="Kojadinovic M."/>
            <person name="Vuillet L."/>
            <person name="Lajus A."/>
            <person name="Cruveiller S."/>
            <person name="Rouy Z."/>
            <person name="Mangenot S."/>
            <person name="Segurens B."/>
            <person name="Dossat C."/>
            <person name="Franck W.L."/>
            <person name="Chang W.-S."/>
            <person name="Saunders E."/>
            <person name="Bruce D."/>
            <person name="Richardson P."/>
            <person name="Normand P."/>
            <person name="Dreyfus B."/>
            <person name="Pignol D."/>
            <person name="Stacey G."/>
            <person name="Emerich D."/>
            <person name="Vermeglio A."/>
            <person name="Medigue C."/>
            <person name="Sadowsky M."/>
        </authorList>
    </citation>
    <scope>NUCLEOTIDE SEQUENCE [LARGE SCALE GENOMIC DNA]</scope>
    <source>
        <strain>BTAi1 / ATCC BAA-1182</strain>
    </source>
</reference>
<dbReference type="EC" id="2.7.4.6" evidence="1"/>
<dbReference type="EMBL" id="CP000494">
    <property type="protein sequence ID" value="ABQ35914.1"/>
    <property type="molecule type" value="Genomic_DNA"/>
</dbReference>
<dbReference type="RefSeq" id="WP_012043919.1">
    <property type="nucleotide sequence ID" value="NC_009485.1"/>
</dbReference>
<dbReference type="SMR" id="A5EIC0"/>
<dbReference type="STRING" id="288000.BBta_3838"/>
<dbReference type="KEGG" id="bbt:BBta_3838"/>
<dbReference type="eggNOG" id="COG0105">
    <property type="taxonomic scope" value="Bacteria"/>
</dbReference>
<dbReference type="HOGENOM" id="CLU_060216_8_1_5"/>
<dbReference type="OrthoDB" id="9801161at2"/>
<dbReference type="Proteomes" id="UP000000246">
    <property type="component" value="Chromosome"/>
</dbReference>
<dbReference type="GO" id="GO:0005737">
    <property type="term" value="C:cytoplasm"/>
    <property type="evidence" value="ECO:0007669"/>
    <property type="project" value="UniProtKB-SubCell"/>
</dbReference>
<dbReference type="GO" id="GO:0005524">
    <property type="term" value="F:ATP binding"/>
    <property type="evidence" value="ECO:0007669"/>
    <property type="project" value="UniProtKB-UniRule"/>
</dbReference>
<dbReference type="GO" id="GO:0046872">
    <property type="term" value="F:metal ion binding"/>
    <property type="evidence" value="ECO:0007669"/>
    <property type="project" value="UniProtKB-KW"/>
</dbReference>
<dbReference type="GO" id="GO:0004550">
    <property type="term" value="F:nucleoside diphosphate kinase activity"/>
    <property type="evidence" value="ECO:0007669"/>
    <property type="project" value="UniProtKB-UniRule"/>
</dbReference>
<dbReference type="GO" id="GO:0006241">
    <property type="term" value="P:CTP biosynthetic process"/>
    <property type="evidence" value="ECO:0007669"/>
    <property type="project" value="UniProtKB-UniRule"/>
</dbReference>
<dbReference type="GO" id="GO:0006183">
    <property type="term" value="P:GTP biosynthetic process"/>
    <property type="evidence" value="ECO:0007669"/>
    <property type="project" value="UniProtKB-UniRule"/>
</dbReference>
<dbReference type="GO" id="GO:0006228">
    <property type="term" value="P:UTP biosynthetic process"/>
    <property type="evidence" value="ECO:0007669"/>
    <property type="project" value="UniProtKB-UniRule"/>
</dbReference>
<dbReference type="CDD" id="cd04413">
    <property type="entry name" value="NDPk_I"/>
    <property type="match status" value="1"/>
</dbReference>
<dbReference type="Gene3D" id="3.30.70.141">
    <property type="entry name" value="Nucleoside diphosphate kinase-like domain"/>
    <property type="match status" value="1"/>
</dbReference>
<dbReference type="HAMAP" id="MF_00451">
    <property type="entry name" value="NDP_kinase"/>
    <property type="match status" value="1"/>
</dbReference>
<dbReference type="InterPro" id="IPR034907">
    <property type="entry name" value="NDK-like_dom"/>
</dbReference>
<dbReference type="InterPro" id="IPR036850">
    <property type="entry name" value="NDK-like_dom_sf"/>
</dbReference>
<dbReference type="InterPro" id="IPR001564">
    <property type="entry name" value="Nucleoside_diP_kinase"/>
</dbReference>
<dbReference type="NCBIfam" id="NF001908">
    <property type="entry name" value="PRK00668.1"/>
    <property type="match status" value="1"/>
</dbReference>
<dbReference type="PANTHER" id="PTHR46161">
    <property type="entry name" value="NUCLEOSIDE DIPHOSPHATE KINASE"/>
    <property type="match status" value="1"/>
</dbReference>
<dbReference type="PANTHER" id="PTHR46161:SF3">
    <property type="entry name" value="NUCLEOSIDE DIPHOSPHATE KINASE DDB_G0292928-RELATED"/>
    <property type="match status" value="1"/>
</dbReference>
<dbReference type="Pfam" id="PF00334">
    <property type="entry name" value="NDK"/>
    <property type="match status" value="1"/>
</dbReference>
<dbReference type="PRINTS" id="PR01243">
    <property type="entry name" value="NUCDPKINASE"/>
</dbReference>
<dbReference type="SMART" id="SM00562">
    <property type="entry name" value="NDK"/>
    <property type="match status" value="1"/>
</dbReference>
<dbReference type="SUPFAM" id="SSF54919">
    <property type="entry name" value="Nucleoside diphosphate kinase, NDK"/>
    <property type="match status" value="1"/>
</dbReference>
<dbReference type="PROSITE" id="PS51374">
    <property type="entry name" value="NDPK_LIKE"/>
    <property type="match status" value="1"/>
</dbReference>